<dbReference type="EMBL" id="M57692">
    <property type="protein sequence ID" value="AAB00844.1"/>
    <property type="molecule type" value="Genomic_DNA"/>
</dbReference>
<dbReference type="PIR" id="S37705">
    <property type="entry name" value="S37705"/>
</dbReference>
<dbReference type="SMR" id="P37729"/>
<dbReference type="GO" id="GO:0005886">
    <property type="term" value="C:plasma membrane"/>
    <property type="evidence" value="ECO:0007669"/>
    <property type="project" value="UniProtKB-SubCell"/>
</dbReference>
<dbReference type="GO" id="GO:0055085">
    <property type="term" value="P:transmembrane transport"/>
    <property type="evidence" value="ECO:0007669"/>
    <property type="project" value="InterPro"/>
</dbReference>
<dbReference type="CDD" id="cd06261">
    <property type="entry name" value="TM_PBP2"/>
    <property type="match status" value="1"/>
</dbReference>
<dbReference type="Gene3D" id="1.10.3720.10">
    <property type="entry name" value="MetI-like"/>
    <property type="match status" value="1"/>
</dbReference>
<dbReference type="InterPro" id="IPR000515">
    <property type="entry name" value="MetI-like"/>
</dbReference>
<dbReference type="InterPro" id="IPR035906">
    <property type="entry name" value="MetI-like_sf"/>
</dbReference>
<dbReference type="PANTHER" id="PTHR43744">
    <property type="entry name" value="ABC TRANSPORTER PERMEASE PROTEIN MG189-RELATED-RELATED"/>
    <property type="match status" value="1"/>
</dbReference>
<dbReference type="PANTHER" id="PTHR43744:SF8">
    <property type="entry name" value="SN-GLYCEROL-3-PHOSPHATE TRANSPORT SYSTEM PERMEASE PROTEIN UGPE"/>
    <property type="match status" value="1"/>
</dbReference>
<dbReference type="Pfam" id="PF00528">
    <property type="entry name" value="BPD_transp_1"/>
    <property type="match status" value="1"/>
</dbReference>
<dbReference type="SUPFAM" id="SSF161098">
    <property type="entry name" value="MetI-like"/>
    <property type="match status" value="1"/>
</dbReference>
<dbReference type="PROSITE" id="PS50928">
    <property type="entry name" value="ABC_TM1"/>
    <property type="match status" value="1"/>
</dbReference>
<evidence type="ECO:0000255" key="1">
    <source>
        <dbReference type="PROSITE-ProRule" id="PRU00441"/>
    </source>
</evidence>
<evidence type="ECO:0000305" key="2"/>
<accession>P37729</accession>
<accession>P26828</accession>
<proteinExistence type="inferred from homology"/>
<feature type="chain" id="PRO_0000059947" description="Probable starch degradation products transport system permease protein AmyC">
    <location>
        <begin position="1"/>
        <end position="274"/>
    </location>
</feature>
<feature type="transmembrane region" description="Helical" evidence="1">
    <location>
        <begin position="11"/>
        <end position="31"/>
    </location>
</feature>
<feature type="transmembrane region" description="Helical" evidence="1">
    <location>
        <begin position="73"/>
        <end position="93"/>
    </location>
</feature>
<feature type="transmembrane region" description="Helical" evidence="1">
    <location>
        <begin position="103"/>
        <end position="123"/>
    </location>
</feature>
<feature type="transmembrane region" description="Helical" evidence="1">
    <location>
        <begin position="139"/>
        <end position="159"/>
    </location>
</feature>
<feature type="transmembrane region" description="Helical" evidence="1">
    <location>
        <begin position="184"/>
        <end position="204"/>
    </location>
</feature>
<feature type="transmembrane region" description="Helical" evidence="1">
    <location>
        <begin position="238"/>
        <end position="258"/>
    </location>
</feature>
<feature type="domain" description="ABC transmembrane type-1" evidence="1">
    <location>
        <begin position="69"/>
        <end position="259"/>
    </location>
</feature>
<feature type="sequence conflict" description="In Ref. 2." evidence="2" ref="2">
    <original>IPFQSVMIPLVAEFGKFHFLTRSGLVFMYLGFGSSLGVFLY</original>
    <variation>DPVSISYDSISSGIWEISFSYKVRACIYVLGIWFKLRSVFIL</variation>
    <location>
        <begin position="115"/>
        <end position="155"/>
    </location>
</feature>
<gene>
    <name type="primary">amyC</name>
</gene>
<sequence>MRKVHVQKYLLTFLGIVLSLLWISPFYIILVNSFKTKLELFTNTLSLPKSLMLDNYKTAAANLNLSEAFSNTLIITVFSILIIAIFSSMTAYALQRVKRKSSVIIYMIFTVAMLIPFQSVMIPLVAEFGKFHFLTRSGLVFMYLGFGSSLGVFLYYGALKGIPTSLDEAALIDGCSRFRIYWNIILPLLNPTTITLAVLDIMWIWNDYLLPSLVINKVGSRTLPLMIFYFFSQYTKQWNLGMAGLTIAILPVVIFYFLAQRKLVTAIIAGAVKQ</sequence>
<comment type="function">
    <text>Probably part of a binding-protein-dependent transport system starch degradation products. Probably responsible for the translocation of the substrate across the membrane.</text>
</comment>
<comment type="subcellular location">
    <subcellularLocation>
        <location evidence="2">Cell membrane</location>
        <topology evidence="1">Multi-pass membrane protein</topology>
    </subcellularLocation>
</comment>
<comment type="similarity">
    <text evidence="2">Belongs to the binding-protein-dependent transport system permease family. MalFG subfamily.</text>
</comment>
<name>AMYC_THETU</name>
<protein>
    <recommendedName>
        <fullName>Probable starch degradation products transport system permease protein AmyC</fullName>
    </recommendedName>
</protein>
<reference key="1">
    <citation type="journal article" date="1991" name="FEMS Microbiol. Lett.">
        <title>Nucleotide sequence of two Clostridium thermosulfurogenes EM1 genes homologous to Escherichia coli genes encoding integral membrane components of binding protein-dependent transport systems.</title>
        <authorList>
            <person name="Bahl H."/>
            <person name="Burchhardt G."/>
            <person name="Wienecke A."/>
        </authorList>
    </citation>
    <scope>NUCLEOTIDE SEQUENCE [GENOMIC DNA]</scope>
    <source>
        <strain>DSM 3896 / EM1</strain>
    </source>
</reference>
<reference key="2">
    <citation type="journal article" date="1991" name="Appl. Environ. Microbiol.">
        <title>Alpha-amylase of Clostridium thermosulfurogenes EM1: nucleotide sequence of the gene, processing of the enzyme, and comparison of other alpha-amylases.</title>
        <authorList>
            <person name="Bahl H."/>
            <person name="Burchhardt G."/>
            <person name="Spreinat A."/>
            <person name="Haeckel K."/>
            <person name="Wienecke A."/>
            <person name="Schmidt B."/>
            <person name="Antranikian G."/>
        </authorList>
    </citation>
    <scope>NUCLEOTIDE SEQUENCE [GENOMIC DNA] OF 115-274</scope>
    <source>
        <strain>DSM 3896 / EM1</strain>
    </source>
</reference>
<keyword id="KW-1003">Cell membrane</keyword>
<keyword id="KW-0472">Membrane</keyword>
<keyword id="KW-0812">Transmembrane</keyword>
<keyword id="KW-1133">Transmembrane helix</keyword>
<keyword id="KW-0813">Transport</keyword>
<organism>
    <name type="scientific">Thermoanaerobacterium thermosulfurigenes</name>
    <name type="common">Clostridium thermosulfurogenes</name>
    <dbReference type="NCBI Taxonomy" id="33950"/>
    <lineage>
        <taxon>Bacteria</taxon>
        <taxon>Bacillati</taxon>
        <taxon>Bacillota</taxon>
        <taxon>Clostridia</taxon>
        <taxon>Thermoanaerobacterales</taxon>
        <taxon>Thermoanaerobacteraceae</taxon>
        <taxon>Thermoanaerobacterium</taxon>
    </lineage>
</organism>